<sequence>MTVETSQTPSAAIDSDRWPAVAKVPRGPLAAASAAIANRLLRRTATHLPLRLVYSDGTATGAADPRAPSLFIHRPDALARRIGRHGLIGFGESYMAGEWSSKELTRVLTVLAGSVDELVPRSLHWLRPITPTFRPSWPDHSRDQARRNIAVHYDLSNDLFAAFLDETMTYSCAMFTDLLAQPTPAWTELAAAQRRKIDRLLDVAGVQQGSHVLEIGTGWGELCIRAAARGAHIRSVTLSVEQQRLARQRVAAAGFGHRVEIDLCDYRDVDGQYDSVVSVEMIEAVGYRSWPRYFAALEQLVRPGGPVAIQAITMPHHRMLATRHTQTWIQKYIFPGGLLPSTQAIIDITGQHTGLRIVDAASLRPHYAETLRLWRERFMQRRDGLAHLGFDEVFARMWELYLAYSEAGFRSGYLDVYQWTLIREGPP</sequence>
<accession>O53732</accession>
<accession>F2GMG5</accession>
<accession>I6Y3T0</accession>
<accession>L0T6H6</accession>
<keyword id="KW-0961">Cell wall biogenesis/degradation</keyword>
<keyword id="KW-0444">Lipid biosynthesis</keyword>
<keyword id="KW-0443">Lipid metabolism</keyword>
<keyword id="KW-0489">Methyltransferase</keyword>
<keyword id="KW-1185">Reference proteome</keyword>
<keyword id="KW-0949">S-adenosyl-L-methionine</keyword>
<keyword id="KW-0808">Transferase</keyword>
<gene>
    <name evidence="2" type="primary">ufaA1</name>
    <name evidence="5" type="ordered locus">Rv0447c</name>
    <name evidence="4" type="ordered locus">RVBD_0447c</name>
    <name evidence="6" type="ORF">P425_00460</name>
</gene>
<proteinExistence type="evidence at protein level"/>
<reference key="1">
    <citation type="journal article" date="1998" name="Nature">
        <title>Deciphering the biology of Mycobacterium tuberculosis from the complete genome sequence.</title>
        <authorList>
            <person name="Cole S.T."/>
            <person name="Brosch R."/>
            <person name="Parkhill J."/>
            <person name="Garnier T."/>
            <person name="Churcher C.M."/>
            <person name="Harris D.E."/>
            <person name="Gordon S.V."/>
            <person name="Eiglmeier K."/>
            <person name="Gas S."/>
            <person name="Barry C.E. III"/>
            <person name="Tekaia F."/>
            <person name="Badcock K."/>
            <person name="Basham D."/>
            <person name="Brown D."/>
            <person name="Chillingworth T."/>
            <person name="Connor R."/>
            <person name="Davies R.M."/>
            <person name="Devlin K."/>
            <person name="Feltwell T."/>
            <person name="Gentles S."/>
            <person name="Hamlin N."/>
            <person name="Holroyd S."/>
            <person name="Hornsby T."/>
            <person name="Jagels K."/>
            <person name="Krogh A."/>
            <person name="McLean J."/>
            <person name="Moule S."/>
            <person name="Murphy L.D."/>
            <person name="Oliver S."/>
            <person name="Osborne J."/>
            <person name="Quail M.A."/>
            <person name="Rajandream M.A."/>
            <person name="Rogers J."/>
            <person name="Rutter S."/>
            <person name="Seeger K."/>
            <person name="Skelton S."/>
            <person name="Squares S."/>
            <person name="Squares R."/>
            <person name="Sulston J.E."/>
            <person name="Taylor K."/>
            <person name="Whitehead S."/>
            <person name="Barrell B.G."/>
        </authorList>
    </citation>
    <scope>NUCLEOTIDE SEQUENCE [LARGE SCALE GENOMIC DNA]</scope>
    <source>
        <strain>ATCC 25618 / H37Rv</strain>
    </source>
</reference>
<reference key="2">
    <citation type="submission" date="2013-11" db="EMBL/GenBank/DDBJ databases">
        <title>The genome sequence of Mycobacterium tuberculosis H37Rv.</title>
        <authorList>
            <consortium name="The Broad Institute Genome Sequencing Platform"/>
            <person name="Galagan J."/>
            <person name="Kreiswirth B."/>
            <person name="Dobos K."/>
            <person name="Fortune S."/>
            <person name="Fitzgerald M."/>
            <person name="Young S.K."/>
            <person name="Zeng Q."/>
            <person name="Gargeya S."/>
            <person name="Abouelleil A."/>
            <person name="Alvarado L."/>
            <person name="Berlin A.M."/>
            <person name="Chapman S.B."/>
            <person name="Gainer-Dewar J."/>
            <person name="Goldberg J."/>
            <person name="Gnerre S."/>
            <person name="Griggs A."/>
            <person name="Gujja S."/>
            <person name="Hansen M."/>
            <person name="Howarth C."/>
            <person name="Imamovic A."/>
            <person name="Larimer J."/>
            <person name="McCowan C."/>
            <person name="Murphy C."/>
            <person name="Pearson M."/>
            <person name="Poon T."/>
            <person name="Priest M."/>
            <person name="Roberts A."/>
            <person name="Saif S."/>
            <person name="Shea T."/>
            <person name="Sykes S."/>
            <person name="Wortman J."/>
            <person name="Nusbaum C."/>
            <person name="Birren B."/>
        </authorList>
    </citation>
    <scope>NUCLEOTIDE SEQUENCE [LARGE SCALE GENOMIC DNA]</scope>
    <source>
        <strain>ATCC 25618 / H37Rv</strain>
    </source>
</reference>
<reference key="3">
    <citation type="submission" date="2014-04" db="EMBL/GenBank/DDBJ databases">
        <title>The genome sequence of Mycobacterium tuberculosis H37Rv.</title>
        <authorList>
            <consortium name="The Broad Institute Genomics Platform"/>
            <consortium name="The Broad Institute Genome Sequencing Center for Infectious Disease"/>
            <person name="Earl A.M."/>
            <person name="Kreiswirth B."/>
            <person name="Gomez J."/>
            <person name="Victor T."/>
            <person name="Desjardins C."/>
            <person name="Abeel T."/>
            <person name="Young S."/>
            <person name="Zeng Q."/>
            <person name="Gargeya S."/>
            <person name="Abouelleil A."/>
            <person name="Alvarado L."/>
            <person name="Chapman S.B."/>
            <person name="Gainer-Dewar J."/>
            <person name="Goldberg J."/>
            <person name="Griggs A."/>
            <person name="Gujja S."/>
            <person name="Hansen M."/>
            <person name="Howarth C."/>
            <person name="Imamovic A."/>
            <person name="Larimer J."/>
            <person name="Murphy C."/>
            <person name="Naylor J."/>
            <person name="Pearson M."/>
            <person name="Poon T.W."/>
            <person name="Priest M."/>
            <person name="Roberts A."/>
            <person name="Saif S."/>
            <person name="Shea T."/>
            <person name="Sykes S."/>
            <person name="Wortman J."/>
            <person name="Nusbaum C."/>
            <person name="Birren B."/>
        </authorList>
    </citation>
    <scope>NUCLEOTIDE SEQUENCE [LARGE SCALE GENOMIC DNA]</scope>
    <source>
        <strain>ATCC 25618 / H37Rv</strain>
    </source>
</reference>
<reference key="4">
    <citation type="journal article" date="2013" name="Biotechnol. Appl. Biochem.">
        <title>Expression and characterization of Rv0447c product, potentially the methyltransferase involved in tuberculostearic acid biosynthesis in Mycobacterium tuberculosis.</title>
        <authorList>
            <person name="Meena L.S."/>
            <person name="Kolattukudy P.E."/>
        </authorList>
    </citation>
    <scope>FUNCTION</scope>
    <scope>ACTIVITY REGULATION</scope>
    <scope>BIOPHYSICOCHEMICAL PROPERTIES</scope>
    <scope>PATHWAY</scope>
    <source>
        <strain>H37Rv</strain>
    </source>
</reference>
<protein>
    <recommendedName>
        <fullName evidence="3">Tuberculostearic acid methyltransferase UfaA1</fullName>
        <shortName evidence="2">TSA methyltransferase</shortName>
        <ecNumber evidence="1">2.1.1.-</ecNumber>
    </recommendedName>
</protein>
<dbReference type="EC" id="2.1.1.-" evidence="1"/>
<dbReference type="EMBL" id="AL123456">
    <property type="protein sequence ID" value="CCP43178.1"/>
    <property type="molecule type" value="Genomic_DNA"/>
</dbReference>
<dbReference type="EMBL" id="CP003248">
    <property type="protein sequence ID" value="AFN48302.1"/>
    <property type="molecule type" value="Genomic_DNA"/>
</dbReference>
<dbReference type="EMBL" id="JLDD01000005">
    <property type="protein sequence ID" value="KBJ40223.1"/>
    <property type="molecule type" value="Genomic_DNA"/>
</dbReference>
<dbReference type="RefSeq" id="NP_214961.1">
    <property type="nucleotide sequence ID" value="NC_000962.3"/>
</dbReference>
<dbReference type="RefSeq" id="WP_003402250.1">
    <property type="nucleotide sequence ID" value="NZ_NVQJ01000002.1"/>
</dbReference>
<dbReference type="SMR" id="O53732"/>
<dbReference type="FunCoup" id="O53732">
    <property type="interactions" value="37"/>
</dbReference>
<dbReference type="STRING" id="83332.Rv0447c"/>
<dbReference type="PaxDb" id="83332-Rv0447c"/>
<dbReference type="DNASU" id="886330"/>
<dbReference type="GeneID" id="886330"/>
<dbReference type="KEGG" id="mtu:Rv0447c"/>
<dbReference type="KEGG" id="mtv:RVBD_0447c"/>
<dbReference type="PATRIC" id="fig|83332.111.peg.488"/>
<dbReference type="TubercuList" id="Rv0447c"/>
<dbReference type="eggNOG" id="COG2230">
    <property type="taxonomic scope" value="Bacteria"/>
</dbReference>
<dbReference type="HOGENOM" id="CLU_026434_0_2_11"/>
<dbReference type="InParanoid" id="O53732"/>
<dbReference type="OrthoDB" id="9782855at2"/>
<dbReference type="PhylomeDB" id="O53732"/>
<dbReference type="UniPathway" id="UPA00094"/>
<dbReference type="Proteomes" id="UP000001584">
    <property type="component" value="Chromosome"/>
</dbReference>
<dbReference type="GO" id="GO:0008168">
    <property type="term" value="F:methyltransferase activity"/>
    <property type="evidence" value="ECO:0007669"/>
    <property type="project" value="UniProtKB-KW"/>
</dbReference>
<dbReference type="GO" id="GO:0071555">
    <property type="term" value="P:cell wall organization"/>
    <property type="evidence" value="ECO:0007669"/>
    <property type="project" value="UniProtKB-KW"/>
</dbReference>
<dbReference type="GO" id="GO:0006633">
    <property type="term" value="P:fatty acid biosynthetic process"/>
    <property type="evidence" value="ECO:0007669"/>
    <property type="project" value="UniProtKB-UniPathway"/>
</dbReference>
<dbReference type="GO" id="GO:0032259">
    <property type="term" value="P:methylation"/>
    <property type="evidence" value="ECO:0007669"/>
    <property type="project" value="UniProtKB-KW"/>
</dbReference>
<dbReference type="CDD" id="cd02440">
    <property type="entry name" value="AdoMet_MTases"/>
    <property type="match status" value="1"/>
</dbReference>
<dbReference type="Gene3D" id="3.40.50.150">
    <property type="entry name" value="Vaccinia Virus protein VP39"/>
    <property type="match status" value="1"/>
</dbReference>
<dbReference type="InterPro" id="IPR050723">
    <property type="entry name" value="CFA/CMAS"/>
</dbReference>
<dbReference type="InterPro" id="IPR003333">
    <property type="entry name" value="CMAS"/>
</dbReference>
<dbReference type="InterPro" id="IPR029063">
    <property type="entry name" value="SAM-dependent_MTases_sf"/>
</dbReference>
<dbReference type="PANTHER" id="PTHR43667">
    <property type="entry name" value="CYCLOPROPANE-FATTY-ACYL-PHOSPHOLIPID SYNTHASE"/>
    <property type="match status" value="1"/>
</dbReference>
<dbReference type="PANTHER" id="PTHR43667:SF2">
    <property type="entry name" value="FATTY ACID C-METHYL TRANSFERASE"/>
    <property type="match status" value="1"/>
</dbReference>
<dbReference type="Pfam" id="PF02353">
    <property type="entry name" value="CMAS"/>
    <property type="match status" value="1"/>
</dbReference>
<dbReference type="PIRSF" id="PIRSF003085">
    <property type="entry name" value="CMAS"/>
    <property type="match status" value="1"/>
</dbReference>
<dbReference type="SUPFAM" id="SSF53335">
    <property type="entry name" value="S-adenosyl-L-methionine-dependent methyltransferases"/>
    <property type="match status" value="1"/>
</dbReference>
<name>UFAA1_MYCTU</name>
<evidence type="ECO:0000269" key="1">
    <source>
    </source>
</evidence>
<evidence type="ECO:0000303" key="2">
    <source>
    </source>
</evidence>
<evidence type="ECO:0000305" key="3"/>
<evidence type="ECO:0000312" key="4">
    <source>
        <dbReference type="EMBL" id="AFN48302.1"/>
    </source>
</evidence>
<evidence type="ECO:0000312" key="5">
    <source>
        <dbReference type="EMBL" id="CCP43178.1"/>
    </source>
</evidence>
<evidence type="ECO:0000312" key="6">
    <source>
        <dbReference type="EMBL" id="KBJ40223.1"/>
    </source>
</evidence>
<comment type="function">
    <text evidence="1">Involved in the biosynthesis of the tuberculostearic acid (10-methylstearic-acid or TSA), a constituent lipid of the mycobacterial cell wall. Catalyzes the transfer of the methyl group from S-adenosyl-L-methionine (SAM) to the double bond of oleic acid in phosphatidylethanolamine or phosphatidylcholine to produce TSA.</text>
</comment>
<comment type="activity regulation">
    <text evidence="1">Inhibited by S-adenosyl-L-homocysteine.</text>
</comment>
<comment type="biophysicochemical properties">
    <kinetics>
        <KM evidence="1">14.2 uM for dioleyl phosphatidylethanolamine</KM>
        <KM evidence="1">12.5 uM for SAM</KM>
        <KM evidence="1">83.3 uM for NADPH</KM>
    </kinetics>
    <phDependence>
        <text evidence="1">Optimum pH is 7-8.</text>
    </phDependence>
</comment>
<comment type="pathway">
    <text evidence="1">Lipid metabolism; fatty acid biosynthesis.</text>
</comment>
<comment type="similarity">
    <text evidence="3">Belongs to the CFA/CMAS family.</text>
</comment>
<organism>
    <name type="scientific">Mycobacterium tuberculosis (strain ATCC 25618 / H37Rv)</name>
    <dbReference type="NCBI Taxonomy" id="83332"/>
    <lineage>
        <taxon>Bacteria</taxon>
        <taxon>Bacillati</taxon>
        <taxon>Actinomycetota</taxon>
        <taxon>Actinomycetes</taxon>
        <taxon>Mycobacteriales</taxon>
        <taxon>Mycobacteriaceae</taxon>
        <taxon>Mycobacterium</taxon>
        <taxon>Mycobacterium tuberculosis complex</taxon>
    </lineage>
</organism>
<feature type="chain" id="PRO_0000432977" description="Tuberculostearic acid methyltransferase UfaA1">
    <location>
        <begin position="1"/>
        <end position="427"/>
    </location>
</feature>